<keyword id="KW-0521">NADP</keyword>
<keyword id="KW-0560">Oxidoreductase</keyword>
<keyword id="KW-0627">Porphyrin biosynthesis</keyword>
<keyword id="KW-1185">Reference proteome</keyword>
<reference key="1">
    <citation type="journal article" date="2005" name="Proc. Natl. Acad. Sci. U.S.A.">
        <title>Complete genome sequence of Vibrio fischeri: a symbiotic bacterium with pathogenic congeners.</title>
        <authorList>
            <person name="Ruby E.G."/>
            <person name="Urbanowski M."/>
            <person name="Campbell J."/>
            <person name="Dunn A."/>
            <person name="Faini M."/>
            <person name="Gunsalus R."/>
            <person name="Lostroh P."/>
            <person name="Lupp C."/>
            <person name="McCann J."/>
            <person name="Millikan D."/>
            <person name="Schaefer A."/>
            <person name="Stabb E."/>
            <person name="Stevens A."/>
            <person name="Visick K."/>
            <person name="Whistler C."/>
            <person name="Greenberg E.P."/>
        </authorList>
    </citation>
    <scope>NUCLEOTIDE SEQUENCE [LARGE SCALE GENOMIC DNA]</scope>
    <source>
        <strain>ATCC 700601 / ES114</strain>
    </source>
</reference>
<feature type="chain" id="PRO_1000004721" description="Glutamyl-tRNA reductase">
    <location>
        <begin position="1"/>
        <end position="418"/>
    </location>
</feature>
<feature type="active site" description="Nucleophile" evidence="1">
    <location>
        <position position="50"/>
    </location>
</feature>
<feature type="binding site" evidence="1">
    <location>
        <begin position="49"/>
        <end position="52"/>
    </location>
    <ligand>
        <name>substrate</name>
    </ligand>
</feature>
<feature type="binding site" evidence="1">
    <location>
        <position position="108"/>
    </location>
    <ligand>
        <name>substrate</name>
    </ligand>
</feature>
<feature type="binding site" evidence="1">
    <location>
        <begin position="113"/>
        <end position="115"/>
    </location>
    <ligand>
        <name>substrate</name>
    </ligand>
</feature>
<feature type="binding site" evidence="1">
    <location>
        <position position="119"/>
    </location>
    <ligand>
        <name>substrate</name>
    </ligand>
</feature>
<feature type="binding site" evidence="1">
    <location>
        <begin position="188"/>
        <end position="193"/>
    </location>
    <ligand>
        <name>NADP(+)</name>
        <dbReference type="ChEBI" id="CHEBI:58349"/>
    </ligand>
</feature>
<feature type="site" description="Important for activity" evidence="1">
    <location>
        <position position="98"/>
    </location>
</feature>
<gene>
    <name evidence="1" type="primary">hemA</name>
    <name type="ordered locus">VF_0767</name>
</gene>
<comment type="function">
    <text evidence="1">Catalyzes the NADPH-dependent reduction of glutamyl-tRNA(Glu) to glutamate 1-semialdehyde (GSA).</text>
</comment>
<comment type="catalytic activity">
    <reaction evidence="1">
        <text>(S)-4-amino-5-oxopentanoate + tRNA(Glu) + NADP(+) = L-glutamyl-tRNA(Glu) + NADPH + H(+)</text>
        <dbReference type="Rhea" id="RHEA:12344"/>
        <dbReference type="Rhea" id="RHEA-COMP:9663"/>
        <dbReference type="Rhea" id="RHEA-COMP:9680"/>
        <dbReference type="ChEBI" id="CHEBI:15378"/>
        <dbReference type="ChEBI" id="CHEBI:57501"/>
        <dbReference type="ChEBI" id="CHEBI:57783"/>
        <dbReference type="ChEBI" id="CHEBI:58349"/>
        <dbReference type="ChEBI" id="CHEBI:78442"/>
        <dbReference type="ChEBI" id="CHEBI:78520"/>
        <dbReference type="EC" id="1.2.1.70"/>
    </reaction>
</comment>
<comment type="pathway">
    <text evidence="1">Porphyrin-containing compound metabolism; protoporphyrin-IX biosynthesis; 5-aminolevulinate from L-glutamyl-tRNA(Glu): step 1/2.</text>
</comment>
<comment type="subunit">
    <text evidence="1">Homodimer.</text>
</comment>
<comment type="domain">
    <text evidence="1">Possesses an unusual extended V-shaped dimeric structure with each monomer consisting of three distinct domains arranged along a curved 'spinal' alpha-helix. The N-terminal catalytic domain specifically recognizes the glutamate moiety of the substrate. The second domain is the NADPH-binding domain, and the third C-terminal domain is responsible for dimerization.</text>
</comment>
<comment type="miscellaneous">
    <text evidence="1">During catalysis, the active site Cys acts as a nucleophile attacking the alpha-carbonyl group of tRNA-bound glutamate with the formation of a thioester intermediate between enzyme and glutamate, and the concomitant release of tRNA(Glu). The thioester intermediate is finally reduced by direct hydride transfer from NADPH, to form the product GSA.</text>
</comment>
<comment type="similarity">
    <text evidence="1">Belongs to the glutamyl-tRNA reductase family.</text>
</comment>
<protein>
    <recommendedName>
        <fullName evidence="1">Glutamyl-tRNA reductase</fullName>
        <shortName evidence="1">GluTR</shortName>
        <ecNumber evidence="1">1.2.1.70</ecNumber>
    </recommendedName>
</protein>
<accession>Q5E6T4</accession>
<name>HEM1_ALIF1</name>
<sequence>MSLLVIGINHTSASVDLREKVAFSPEKLTKALDELKNSDAIQSGVILSTCNRTEIYCEVKHGISSGYVINWLAEFHHVALETLMPSIYIHEEQAAVKHLMRVSCGLDSLVLGEPQILGQVKKAFADAREHNAVEGTIEKLFQQDFSVAKRVRTETNIGGNAVSVAYAACTLARQIFESLSDSTVLLVGAGETIELVAKHLDDSGCKRLIVANRTRERAMGLAEQFNAEVISLPEIPEHLPKADIIISSTASPLPIIGKGMVESALKLRKHQPMLFVDIAVPRDIEGEVAELNDAYLYSVDDLQSIIDHNIEQRKIEAIQAEAIVSEESAEFMTWIRSRQAVNSIRQYRENSEAMRIELLQKSMQALASGQNPEKVLAELSNKLTNKLIHAPTLAMQQAAKNGETEKLTVIRTTIGLDN</sequence>
<dbReference type="EC" id="1.2.1.70" evidence="1"/>
<dbReference type="EMBL" id="CP000020">
    <property type="protein sequence ID" value="AAW85262.1"/>
    <property type="molecule type" value="Genomic_DNA"/>
</dbReference>
<dbReference type="RefSeq" id="WP_011261469.1">
    <property type="nucleotide sequence ID" value="NC_006840.2"/>
</dbReference>
<dbReference type="RefSeq" id="YP_204150.1">
    <property type="nucleotide sequence ID" value="NC_006840.2"/>
</dbReference>
<dbReference type="SMR" id="Q5E6T4"/>
<dbReference type="STRING" id="312309.VF_0767"/>
<dbReference type="EnsemblBacteria" id="AAW85262">
    <property type="protein sequence ID" value="AAW85262"/>
    <property type="gene ID" value="VF_0767"/>
</dbReference>
<dbReference type="GeneID" id="54163434"/>
<dbReference type="KEGG" id="vfi:VF_0767"/>
<dbReference type="PATRIC" id="fig|312309.11.peg.759"/>
<dbReference type="eggNOG" id="COG0373">
    <property type="taxonomic scope" value="Bacteria"/>
</dbReference>
<dbReference type="HOGENOM" id="CLU_035113_2_2_6"/>
<dbReference type="OrthoDB" id="110209at2"/>
<dbReference type="UniPathway" id="UPA00251">
    <property type="reaction ID" value="UER00316"/>
</dbReference>
<dbReference type="Proteomes" id="UP000000537">
    <property type="component" value="Chromosome I"/>
</dbReference>
<dbReference type="GO" id="GO:0008883">
    <property type="term" value="F:glutamyl-tRNA reductase activity"/>
    <property type="evidence" value="ECO:0007669"/>
    <property type="project" value="UniProtKB-UniRule"/>
</dbReference>
<dbReference type="GO" id="GO:0050661">
    <property type="term" value="F:NADP binding"/>
    <property type="evidence" value="ECO:0007669"/>
    <property type="project" value="InterPro"/>
</dbReference>
<dbReference type="GO" id="GO:0019353">
    <property type="term" value="P:protoporphyrinogen IX biosynthetic process from glutamate"/>
    <property type="evidence" value="ECO:0007669"/>
    <property type="project" value="TreeGrafter"/>
</dbReference>
<dbReference type="CDD" id="cd05213">
    <property type="entry name" value="NAD_bind_Glutamyl_tRNA_reduct"/>
    <property type="match status" value="1"/>
</dbReference>
<dbReference type="FunFam" id="3.30.460.30:FF:000001">
    <property type="entry name" value="Glutamyl-tRNA reductase"/>
    <property type="match status" value="1"/>
</dbReference>
<dbReference type="FunFam" id="3.40.50.720:FF:000031">
    <property type="entry name" value="Glutamyl-tRNA reductase"/>
    <property type="match status" value="1"/>
</dbReference>
<dbReference type="Gene3D" id="3.30.460.30">
    <property type="entry name" value="Glutamyl-tRNA reductase, N-terminal domain"/>
    <property type="match status" value="1"/>
</dbReference>
<dbReference type="Gene3D" id="3.40.50.720">
    <property type="entry name" value="NAD(P)-binding Rossmann-like Domain"/>
    <property type="match status" value="1"/>
</dbReference>
<dbReference type="HAMAP" id="MF_00087">
    <property type="entry name" value="Glu_tRNA_reductase"/>
    <property type="match status" value="1"/>
</dbReference>
<dbReference type="InterPro" id="IPR000343">
    <property type="entry name" value="4pyrrol_synth_GluRdtase"/>
</dbReference>
<dbReference type="InterPro" id="IPR015896">
    <property type="entry name" value="4pyrrol_synth_GluRdtase_dimer"/>
</dbReference>
<dbReference type="InterPro" id="IPR015895">
    <property type="entry name" value="4pyrrol_synth_GluRdtase_N"/>
</dbReference>
<dbReference type="InterPro" id="IPR018214">
    <property type="entry name" value="GluRdtase_CS"/>
</dbReference>
<dbReference type="InterPro" id="IPR036453">
    <property type="entry name" value="GluRdtase_dimer_dom_sf"/>
</dbReference>
<dbReference type="InterPro" id="IPR036343">
    <property type="entry name" value="GluRdtase_N_sf"/>
</dbReference>
<dbReference type="InterPro" id="IPR036291">
    <property type="entry name" value="NAD(P)-bd_dom_sf"/>
</dbReference>
<dbReference type="InterPro" id="IPR006151">
    <property type="entry name" value="Shikm_DH/Glu-tRNA_Rdtase"/>
</dbReference>
<dbReference type="NCBIfam" id="TIGR01035">
    <property type="entry name" value="hemA"/>
    <property type="match status" value="1"/>
</dbReference>
<dbReference type="PANTHER" id="PTHR43013">
    <property type="entry name" value="GLUTAMYL-TRNA REDUCTASE"/>
    <property type="match status" value="1"/>
</dbReference>
<dbReference type="PANTHER" id="PTHR43013:SF1">
    <property type="entry name" value="GLUTAMYL-TRNA REDUCTASE"/>
    <property type="match status" value="1"/>
</dbReference>
<dbReference type="Pfam" id="PF00745">
    <property type="entry name" value="GlutR_dimer"/>
    <property type="match status" value="1"/>
</dbReference>
<dbReference type="Pfam" id="PF05201">
    <property type="entry name" value="GlutR_N"/>
    <property type="match status" value="1"/>
</dbReference>
<dbReference type="Pfam" id="PF01488">
    <property type="entry name" value="Shikimate_DH"/>
    <property type="match status" value="1"/>
</dbReference>
<dbReference type="PIRSF" id="PIRSF000445">
    <property type="entry name" value="4pyrrol_synth_GluRdtase"/>
    <property type="match status" value="1"/>
</dbReference>
<dbReference type="SUPFAM" id="SSF69742">
    <property type="entry name" value="Glutamyl tRNA-reductase catalytic, N-terminal domain"/>
    <property type="match status" value="1"/>
</dbReference>
<dbReference type="SUPFAM" id="SSF69075">
    <property type="entry name" value="Glutamyl tRNA-reductase dimerization domain"/>
    <property type="match status" value="1"/>
</dbReference>
<dbReference type="SUPFAM" id="SSF51735">
    <property type="entry name" value="NAD(P)-binding Rossmann-fold domains"/>
    <property type="match status" value="1"/>
</dbReference>
<dbReference type="PROSITE" id="PS00747">
    <property type="entry name" value="GLUTR"/>
    <property type="match status" value="1"/>
</dbReference>
<evidence type="ECO:0000255" key="1">
    <source>
        <dbReference type="HAMAP-Rule" id="MF_00087"/>
    </source>
</evidence>
<proteinExistence type="inferred from homology"/>
<organism>
    <name type="scientific">Aliivibrio fischeri (strain ATCC 700601 / ES114)</name>
    <name type="common">Vibrio fischeri</name>
    <dbReference type="NCBI Taxonomy" id="312309"/>
    <lineage>
        <taxon>Bacteria</taxon>
        <taxon>Pseudomonadati</taxon>
        <taxon>Pseudomonadota</taxon>
        <taxon>Gammaproteobacteria</taxon>
        <taxon>Vibrionales</taxon>
        <taxon>Vibrionaceae</taxon>
        <taxon>Aliivibrio</taxon>
    </lineage>
</organism>